<comment type="similarity">
    <text evidence="2">Belongs to the OAF family.</text>
</comment>
<sequence>MRGPRLPALPALLWLALAPLPGPAARAELRVRVRLPGGQVTEESLQADSGSDCISLELRKADGALITLTADFRQEVKIFRALILGELERGQSQFQALCFVTRLHRNEIIPSESMAKLRQKNPRTVRQAEEVRGLEHLSMDVAVNFSKGAQLSSHIHNVCAEAKEAIYTREEDVKFWLEKGMDGSMFEVLPQTSDLPDLQRCKLCTDRWKPCICSYSLSIEWYPCMLKYCKSRDAAGKVSSYKCGIRSCQKGYTFDYYVPQKQLCLWDEET</sequence>
<protein>
    <recommendedName>
        <fullName>Out at first protein homolog</fullName>
    </recommendedName>
    <alternativeName>
        <fullName>Protein V/NheI 1</fullName>
    </alternativeName>
</protein>
<evidence type="ECO:0000255" key="1"/>
<evidence type="ECO:0000305" key="2"/>
<keyword id="KW-1185">Reference proteome</keyword>
<keyword id="KW-0732">Signal</keyword>
<feature type="signal peptide" evidence="1">
    <location>
        <begin position="1"/>
        <end position="24"/>
    </location>
</feature>
<feature type="chain" id="PRO_0000292430" description="Out at first protein homolog">
    <location>
        <begin position="25"/>
        <end position="270"/>
    </location>
</feature>
<name>OAF_CHICK</name>
<organism>
    <name type="scientific">Gallus gallus</name>
    <name type="common">Chicken</name>
    <dbReference type="NCBI Taxonomy" id="9031"/>
    <lineage>
        <taxon>Eukaryota</taxon>
        <taxon>Metazoa</taxon>
        <taxon>Chordata</taxon>
        <taxon>Craniata</taxon>
        <taxon>Vertebrata</taxon>
        <taxon>Euteleostomi</taxon>
        <taxon>Archelosauria</taxon>
        <taxon>Archosauria</taxon>
        <taxon>Dinosauria</taxon>
        <taxon>Saurischia</taxon>
        <taxon>Theropoda</taxon>
        <taxon>Coelurosauria</taxon>
        <taxon>Aves</taxon>
        <taxon>Neognathae</taxon>
        <taxon>Galloanserae</taxon>
        <taxon>Galliformes</taxon>
        <taxon>Phasianidae</taxon>
        <taxon>Phasianinae</taxon>
        <taxon>Gallus</taxon>
    </lineage>
</organism>
<accession>Q71SY6</accession>
<reference key="1">
    <citation type="submission" date="2000-04" db="EMBL/GenBank/DDBJ databases">
        <title>Identification of V/NheI 1.</title>
        <authorList>
            <person name="Kato A."/>
            <person name="Noda M."/>
        </authorList>
    </citation>
    <scope>NUCLEOTIDE SEQUENCE [MRNA]</scope>
</reference>
<proteinExistence type="evidence at transcript level"/>
<dbReference type="EMBL" id="AF257773">
    <property type="protein sequence ID" value="AAQ14284.1"/>
    <property type="molecule type" value="mRNA"/>
</dbReference>
<dbReference type="RefSeq" id="NP_989831.1">
    <property type="nucleotide sequence ID" value="NM_204500.1"/>
</dbReference>
<dbReference type="FunCoup" id="Q71SY6">
    <property type="interactions" value="807"/>
</dbReference>
<dbReference type="STRING" id="9031.ENSGALP00000010848"/>
<dbReference type="PaxDb" id="9031-ENSGALP00000010848"/>
<dbReference type="Ensembl" id="ENSGALT00010063318.1">
    <property type="protein sequence ID" value="ENSGALP00010039086.1"/>
    <property type="gene ID" value="ENSGALG00010025963.1"/>
</dbReference>
<dbReference type="GeneID" id="395161"/>
<dbReference type="KEGG" id="gga:395161"/>
<dbReference type="CTD" id="220323"/>
<dbReference type="VEuPathDB" id="HostDB:geneid_395161"/>
<dbReference type="eggNOG" id="ENOG502QWDA">
    <property type="taxonomic scope" value="Eukaryota"/>
</dbReference>
<dbReference type="GeneTree" id="ENSGT00390000012008"/>
<dbReference type="HOGENOM" id="CLU_043995_1_0_1"/>
<dbReference type="InParanoid" id="Q71SY6"/>
<dbReference type="OrthoDB" id="5947176at2759"/>
<dbReference type="PhylomeDB" id="Q71SY6"/>
<dbReference type="TreeFam" id="TF323953"/>
<dbReference type="PRO" id="PR:Q71SY6"/>
<dbReference type="Proteomes" id="UP000000539">
    <property type="component" value="Chromosome 24"/>
</dbReference>
<dbReference type="Bgee" id="ENSGALG00000006715">
    <property type="expression patterns" value="Expressed in liver and 13 other cell types or tissues"/>
</dbReference>
<dbReference type="InterPro" id="IPR026315">
    <property type="entry name" value="Oaf"/>
</dbReference>
<dbReference type="InterPro" id="IPR053897">
    <property type="entry name" value="Oaf_C"/>
</dbReference>
<dbReference type="InterPro" id="IPR053894">
    <property type="entry name" value="OAF_N"/>
</dbReference>
<dbReference type="PANTHER" id="PTHR13423">
    <property type="entry name" value="OUT AT FIRST"/>
    <property type="match status" value="1"/>
</dbReference>
<dbReference type="PANTHER" id="PTHR13423:SF2">
    <property type="entry name" value="OUT AT FIRST PROTEIN HOMOLOG"/>
    <property type="match status" value="1"/>
</dbReference>
<dbReference type="Pfam" id="PF22873">
    <property type="entry name" value="OAF_C"/>
    <property type="match status" value="1"/>
</dbReference>
<dbReference type="Pfam" id="PF14941">
    <property type="entry name" value="OAF_N"/>
    <property type="match status" value="1"/>
</dbReference>
<gene>
    <name type="primary">oaf</name>
</gene>